<evidence type="ECO:0000255" key="1">
    <source>
        <dbReference type="HAMAP-Rule" id="MF_00012"/>
    </source>
</evidence>
<proteinExistence type="inferred from homology"/>
<comment type="function">
    <text evidence="1">Functions in the biosynthesis of branched-chain amino acids. Catalyzes the dehydration of (2R,3R)-2,3-dihydroxy-3-methylpentanoate (2,3-dihydroxy-3-methylvalerate) into 2-oxo-3-methylpentanoate (2-oxo-3-methylvalerate) and of (2R)-2,3-dihydroxy-3-methylbutanoate (2,3-dihydroxyisovalerate) into 2-oxo-3-methylbutanoate (2-oxoisovalerate), the penultimate precursor to L-isoleucine and L-valine, respectively.</text>
</comment>
<comment type="catalytic activity">
    <reaction evidence="1">
        <text>(2R)-2,3-dihydroxy-3-methylbutanoate = 3-methyl-2-oxobutanoate + H2O</text>
        <dbReference type="Rhea" id="RHEA:24809"/>
        <dbReference type="ChEBI" id="CHEBI:11851"/>
        <dbReference type="ChEBI" id="CHEBI:15377"/>
        <dbReference type="ChEBI" id="CHEBI:49072"/>
        <dbReference type="EC" id="4.2.1.9"/>
    </reaction>
    <physiologicalReaction direction="left-to-right" evidence="1">
        <dbReference type="Rhea" id="RHEA:24810"/>
    </physiologicalReaction>
</comment>
<comment type="catalytic activity">
    <reaction evidence="1">
        <text>(2R,3R)-2,3-dihydroxy-3-methylpentanoate = (S)-3-methyl-2-oxopentanoate + H2O</text>
        <dbReference type="Rhea" id="RHEA:27694"/>
        <dbReference type="ChEBI" id="CHEBI:15377"/>
        <dbReference type="ChEBI" id="CHEBI:35146"/>
        <dbReference type="ChEBI" id="CHEBI:49258"/>
        <dbReference type="EC" id="4.2.1.9"/>
    </reaction>
    <physiologicalReaction direction="left-to-right" evidence="1">
        <dbReference type="Rhea" id="RHEA:27695"/>
    </physiologicalReaction>
</comment>
<comment type="cofactor">
    <cofactor evidence="1">
        <name>[2Fe-2S] cluster</name>
        <dbReference type="ChEBI" id="CHEBI:190135"/>
    </cofactor>
    <text evidence="1">Binds 1 [2Fe-2S] cluster per subunit. This cluster acts as a Lewis acid cofactor.</text>
</comment>
<comment type="cofactor">
    <cofactor evidence="1">
        <name>Mg(2+)</name>
        <dbReference type="ChEBI" id="CHEBI:18420"/>
    </cofactor>
</comment>
<comment type="pathway">
    <text evidence="1">Amino-acid biosynthesis; L-isoleucine biosynthesis; L-isoleucine from 2-oxobutanoate: step 3/4.</text>
</comment>
<comment type="pathway">
    <text evidence="1">Amino-acid biosynthesis; L-valine biosynthesis; L-valine from pyruvate: step 3/4.</text>
</comment>
<comment type="subunit">
    <text evidence="1">Homodimer.</text>
</comment>
<comment type="similarity">
    <text evidence="1">Belongs to the IlvD/Edd family.</text>
</comment>
<protein>
    <recommendedName>
        <fullName evidence="1">Dihydroxy-acid dehydratase</fullName>
        <shortName evidence="1">DAD</shortName>
        <ecNumber evidence="1">4.2.1.9</ecNumber>
    </recommendedName>
</protein>
<name>ILVD_AZOPC</name>
<dbReference type="EC" id="4.2.1.9" evidence="1"/>
<dbReference type="EMBL" id="AP010656">
    <property type="protein sequence ID" value="BAG83573.1"/>
    <property type="molecule type" value="Genomic_DNA"/>
</dbReference>
<dbReference type="RefSeq" id="WP_012573334.1">
    <property type="nucleotide sequence ID" value="NC_011565.1"/>
</dbReference>
<dbReference type="SMR" id="B6YQV1"/>
<dbReference type="STRING" id="511995.CFPG_310"/>
<dbReference type="KEGG" id="aps:CFPG_310"/>
<dbReference type="eggNOG" id="COG0129">
    <property type="taxonomic scope" value="Bacteria"/>
</dbReference>
<dbReference type="HOGENOM" id="CLU_014271_4_2_10"/>
<dbReference type="OrthoDB" id="9807077at2"/>
<dbReference type="UniPathway" id="UPA00047">
    <property type="reaction ID" value="UER00057"/>
</dbReference>
<dbReference type="UniPathway" id="UPA00049">
    <property type="reaction ID" value="UER00061"/>
</dbReference>
<dbReference type="Proteomes" id="UP000000723">
    <property type="component" value="Chromosome"/>
</dbReference>
<dbReference type="GO" id="GO:0005829">
    <property type="term" value="C:cytosol"/>
    <property type="evidence" value="ECO:0007669"/>
    <property type="project" value="TreeGrafter"/>
</dbReference>
<dbReference type="GO" id="GO:0051537">
    <property type="term" value="F:2 iron, 2 sulfur cluster binding"/>
    <property type="evidence" value="ECO:0007669"/>
    <property type="project" value="UniProtKB-UniRule"/>
</dbReference>
<dbReference type="GO" id="GO:0004160">
    <property type="term" value="F:dihydroxy-acid dehydratase activity"/>
    <property type="evidence" value="ECO:0007669"/>
    <property type="project" value="UniProtKB-UniRule"/>
</dbReference>
<dbReference type="GO" id="GO:0000287">
    <property type="term" value="F:magnesium ion binding"/>
    <property type="evidence" value="ECO:0007669"/>
    <property type="project" value="UniProtKB-UniRule"/>
</dbReference>
<dbReference type="GO" id="GO:0009097">
    <property type="term" value="P:isoleucine biosynthetic process"/>
    <property type="evidence" value="ECO:0007669"/>
    <property type="project" value="UniProtKB-UniRule"/>
</dbReference>
<dbReference type="GO" id="GO:0009099">
    <property type="term" value="P:L-valine biosynthetic process"/>
    <property type="evidence" value="ECO:0007669"/>
    <property type="project" value="UniProtKB-UniRule"/>
</dbReference>
<dbReference type="FunFam" id="3.50.30.80:FF:000001">
    <property type="entry name" value="Dihydroxy-acid dehydratase"/>
    <property type="match status" value="1"/>
</dbReference>
<dbReference type="Gene3D" id="3.50.30.80">
    <property type="entry name" value="IlvD/EDD C-terminal domain-like"/>
    <property type="match status" value="1"/>
</dbReference>
<dbReference type="HAMAP" id="MF_00012">
    <property type="entry name" value="IlvD"/>
    <property type="match status" value="1"/>
</dbReference>
<dbReference type="InterPro" id="IPR042096">
    <property type="entry name" value="Dihydro-acid_dehy_C"/>
</dbReference>
<dbReference type="InterPro" id="IPR004404">
    <property type="entry name" value="DihydroxyA_deHydtase"/>
</dbReference>
<dbReference type="InterPro" id="IPR020558">
    <property type="entry name" value="DiOHA_6PGluconate_deHydtase_CS"/>
</dbReference>
<dbReference type="InterPro" id="IPR056740">
    <property type="entry name" value="ILV_EDD_C"/>
</dbReference>
<dbReference type="InterPro" id="IPR000581">
    <property type="entry name" value="ILV_EDD_N"/>
</dbReference>
<dbReference type="InterPro" id="IPR037237">
    <property type="entry name" value="IlvD/EDD_N"/>
</dbReference>
<dbReference type="NCBIfam" id="TIGR00110">
    <property type="entry name" value="ilvD"/>
    <property type="match status" value="1"/>
</dbReference>
<dbReference type="NCBIfam" id="NF009103">
    <property type="entry name" value="PRK12448.1"/>
    <property type="match status" value="1"/>
</dbReference>
<dbReference type="PANTHER" id="PTHR43661">
    <property type="entry name" value="D-XYLONATE DEHYDRATASE"/>
    <property type="match status" value="1"/>
</dbReference>
<dbReference type="PANTHER" id="PTHR43661:SF3">
    <property type="entry name" value="D-XYLONATE DEHYDRATASE YAGF-RELATED"/>
    <property type="match status" value="1"/>
</dbReference>
<dbReference type="Pfam" id="PF24877">
    <property type="entry name" value="ILV_EDD_C"/>
    <property type="match status" value="1"/>
</dbReference>
<dbReference type="Pfam" id="PF00920">
    <property type="entry name" value="ILVD_EDD_N"/>
    <property type="match status" value="1"/>
</dbReference>
<dbReference type="SUPFAM" id="SSF143975">
    <property type="entry name" value="IlvD/EDD N-terminal domain-like"/>
    <property type="match status" value="1"/>
</dbReference>
<dbReference type="SUPFAM" id="SSF52016">
    <property type="entry name" value="LeuD/IlvD-like"/>
    <property type="match status" value="1"/>
</dbReference>
<dbReference type="PROSITE" id="PS00886">
    <property type="entry name" value="ILVD_EDD_1"/>
    <property type="match status" value="1"/>
</dbReference>
<dbReference type="PROSITE" id="PS00887">
    <property type="entry name" value="ILVD_EDD_2"/>
    <property type="match status" value="1"/>
</dbReference>
<reference key="1">
    <citation type="journal article" date="2008" name="Science">
        <title>Genome of an endosymbiont coupling N2 fixation to cellulolysis within RT protist cells in termite gut.</title>
        <authorList>
            <person name="Hongoh Y."/>
            <person name="Sharma V.K."/>
            <person name="Prakash T."/>
            <person name="Noda S."/>
            <person name="Toh H."/>
            <person name="Taylor T.D."/>
            <person name="Kudo T."/>
            <person name="Sakaki Y."/>
            <person name="Toyoda A."/>
            <person name="Hattori M."/>
            <person name="Ohkuma M."/>
        </authorList>
    </citation>
    <scope>NUCLEOTIDE SEQUENCE [LARGE SCALE GENOMIC DNA]</scope>
</reference>
<keyword id="KW-0001">2Fe-2S</keyword>
<keyword id="KW-0028">Amino-acid biosynthesis</keyword>
<keyword id="KW-0100">Branched-chain amino acid biosynthesis</keyword>
<keyword id="KW-0408">Iron</keyword>
<keyword id="KW-0411">Iron-sulfur</keyword>
<keyword id="KW-0456">Lyase</keyword>
<keyword id="KW-0460">Magnesium</keyword>
<keyword id="KW-0479">Metal-binding</keyword>
<keyword id="KW-1185">Reference proteome</keyword>
<sequence length="609" mass="65889">MKIQLRSHESTYGRKMAGTRALWKANGMKVEQFNKPIIAIVNSFTQFVPGHAHLHEVGQFVKSEIEKQGCFAAEFNTIAIDDGIAMGHNGMLYSLPSRDLIADSVEYMIQAHKADAMVCISNCDKITPGMLMASMRLNIPTVFVSGGPMEAGNLNGNRLDLIEVMVQSADAFVSDEQVRQVELNACPTCGSCSGMFTANSMNCLNEAIGLALPGNGTIVATHTRRKQLFADAASLIVKNTYKYYEKGNENVLPLSIATRESFLNAMTLDIAMGGSTNTILHLLAIAHEAGVDFTMQDIDTLSRKTPCLCKISPNASKYYIQDVNRAGGIIGILSELHKSKLIDVSAKRVDGLTVAEAIRQFDICSTDVTKEALNKYKSAPGNRFNLVMASQQNDYDTLDTDRMNGCIRSTKYAYSEDGGLAILKGNIAMDGCVVKTAGIDENIFLFSGPAKVFDSQESACRGILEGKIVSGDVVVIIYEGPKGGPGMQEMLYPTSYIKSRHLGKGCALITDGRFSGGTSGLSIGHISPEAAASGNIGLVRNNDIIAINIPERTINVLLSEEELAKRRKEELQRGDAAFTPPNRKRIVPKTLRAYASMVSSADKGAVRII</sequence>
<accession>B6YQV1</accession>
<organism>
    <name type="scientific">Azobacteroides pseudotrichonymphae genomovar. CFP2</name>
    <dbReference type="NCBI Taxonomy" id="511995"/>
    <lineage>
        <taxon>Bacteria</taxon>
        <taxon>Pseudomonadati</taxon>
        <taxon>Bacteroidota</taxon>
        <taxon>Bacteroidia</taxon>
        <taxon>Bacteroidales</taxon>
        <taxon>Candidatus Azobacteroides</taxon>
    </lineage>
</organism>
<gene>
    <name evidence="1" type="primary">ilvD</name>
    <name type="ordered locus">CFPG_310</name>
</gene>
<feature type="chain" id="PRO_1000089367" description="Dihydroxy-acid dehydratase">
    <location>
        <begin position="1"/>
        <end position="609"/>
    </location>
</feature>
<feature type="active site" description="Proton acceptor" evidence="1">
    <location>
        <position position="515"/>
    </location>
</feature>
<feature type="binding site" evidence="1">
    <location>
        <position position="82"/>
    </location>
    <ligand>
        <name>Mg(2+)</name>
        <dbReference type="ChEBI" id="CHEBI:18420"/>
    </ligand>
</feature>
<feature type="binding site" evidence="1">
    <location>
        <position position="123"/>
    </location>
    <ligand>
        <name>[2Fe-2S] cluster</name>
        <dbReference type="ChEBI" id="CHEBI:190135"/>
    </ligand>
</feature>
<feature type="binding site" evidence="1">
    <location>
        <position position="124"/>
    </location>
    <ligand>
        <name>Mg(2+)</name>
        <dbReference type="ChEBI" id="CHEBI:18420"/>
    </ligand>
</feature>
<feature type="binding site" description="via carbamate group" evidence="1">
    <location>
        <position position="125"/>
    </location>
    <ligand>
        <name>Mg(2+)</name>
        <dbReference type="ChEBI" id="CHEBI:18420"/>
    </ligand>
</feature>
<feature type="binding site" evidence="1">
    <location>
        <position position="192"/>
    </location>
    <ligand>
        <name>[2Fe-2S] cluster</name>
        <dbReference type="ChEBI" id="CHEBI:190135"/>
    </ligand>
</feature>
<feature type="binding site" evidence="1">
    <location>
        <position position="489"/>
    </location>
    <ligand>
        <name>Mg(2+)</name>
        <dbReference type="ChEBI" id="CHEBI:18420"/>
    </ligand>
</feature>
<feature type="modified residue" description="N6-carboxylysine" evidence="1">
    <location>
        <position position="125"/>
    </location>
</feature>